<geneLocation type="chloroplast"/>
<proteinExistence type="inferred from homology"/>
<reference key="1">
    <citation type="journal article" date="1999" name="Proc. Natl. Acad. Sci. U.S.A.">
        <title>The complete chloroplast DNA sequence of the green alga Nephroselmis olivacea: insights into the architecture of ancestral chloroplast genomes.</title>
        <authorList>
            <person name="Turmel M."/>
            <person name="Otis C."/>
            <person name="Lemieux C."/>
        </authorList>
    </citation>
    <scope>NUCLEOTIDE SEQUENCE [LARGE SCALE GENOMIC DNA]</scope>
    <source>
        <strain>NIES-484 / S-N-5-8</strain>
    </source>
</reference>
<dbReference type="EC" id="7.1.1.-" evidence="1"/>
<dbReference type="EMBL" id="AF137379">
    <property type="protein sequence ID" value="AAD54893.1"/>
    <property type="molecule type" value="Genomic_DNA"/>
</dbReference>
<dbReference type="RefSeq" id="NP_050922.1">
    <property type="nucleotide sequence ID" value="NC_000927.1"/>
</dbReference>
<dbReference type="SMR" id="Q9TKV4"/>
<dbReference type="GeneID" id="801927"/>
<dbReference type="GO" id="GO:0009535">
    <property type="term" value="C:chloroplast thylakoid membrane"/>
    <property type="evidence" value="ECO:0007669"/>
    <property type="project" value="UniProtKB-SubCell"/>
</dbReference>
<dbReference type="GO" id="GO:0051539">
    <property type="term" value="F:4 iron, 4 sulfur cluster binding"/>
    <property type="evidence" value="ECO:0007669"/>
    <property type="project" value="UniProtKB-KW"/>
</dbReference>
<dbReference type="GO" id="GO:0005506">
    <property type="term" value="F:iron ion binding"/>
    <property type="evidence" value="ECO:0007669"/>
    <property type="project" value="UniProtKB-UniRule"/>
</dbReference>
<dbReference type="GO" id="GO:0008137">
    <property type="term" value="F:NADH dehydrogenase (ubiquinone) activity"/>
    <property type="evidence" value="ECO:0007669"/>
    <property type="project" value="InterPro"/>
</dbReference>
<dbReference type="GO" id="GO:0048038">
    <property type="term" value="F:quinone binding"/>
    <property type="evidence" value="ECO:0007669"/>
    <property type="project" value="UniProtKB-KW"/>
</dbReference>
<dbReference type="GO" id="GO:0019684">
    <property type="term" value="P:photosynthesis, light reaction"/>
    <property type="evidence" value="ECO:0007669"/>
    <property type="project" value="UniProtKB-UniRule"/>
</dbReference>
<dbReference type="Gene3D" id="3.30.70.3270">
    <property type="match status" value="1"/>
</dbReference>
<dbReference type="HAMAP" id="MF_01351">
    <property type="entry name" value="NDH1_NuoI"/>
    <property type="match status" value="1"/>
</dbReference>
<dbReference type="InterPro" id="IPR017896">
    <property type="entry name" value="4Fe4S_Fe-S-bd"/>
</dbReference>
<dbReference type="InterPro" id="IPR017900">
    <property type="entry name" value="4Fe4S_Fe_S_CS"/>
</dbReference>
<dbReference type="InterPro" id="IPR010226">
    <property type="entry name" value="NADH_quinone_OxRdtase_chainI"/>
</dbReference>
<dbReference type="InterPro" id="IPR004497">
    <property type="entry name" value="NDHI"/>
</dbReference>
<dbReference type="NCBIfam" id="TIGR00403">
    <property type="entry name" value="ndhI"/>
    <property type="match status" value="1"/>
</dbReference>
<dbReference type="NCBIfam" id="TIGR01971">
    <property type="entry name" value="NuoI"/>
    <property type="match status" value="1"/>
</dbReference>
<dbReference type="NCBIfam" id="NF004537">
    <property type="entry name" value="PRK05888.1-3"/>
    <property type="match status" value="1"/>
</dbReference>
<dbReference type="PANTHER" id="PTHR47275">
    <property type="entry name" value="NAD(P)H-QUINONE OXIDOREDUCTASE SUBUNIT I, CHLOROPLASTIC"/>
    <property type="match status" value="1"/>
</dbReference>
<dbReference type="PANTHER" id="PTHR47275:SF1">
    <property type="entry name" value="NAD(P)H-QUINONE OXIDOREDUCTASE SUBUNIT I, CHLOROPLASTIC"/>
    <property type="match status" value="1"/>
</dbReference>
<dbReference type="Pfam" id="PF12838">
    <property type="entry name" value="Fer4_7"/>
    <property type="match status" value="1"/>
</dbReference>
<dbReference type="SUPFAM" id="SSF54862">
    <property type="entry name" value="4Fe-4S ferredoxins"/>
    <property type="match status" value="1"/>
</dbReference>
<dbReference type="PROSITE" id="PS00198">
    <property type="entry name" value="4FE4S_FER_1"/>
    <property type="match status" value="2"/>
</dbReference>
<dbReference type="PROSITE" id="PS51379">
    <property type="entry name" value="4FE4S_FER_2"/>
    <property type="match status" value="2"/>
</dbReference>
<sequence>MFDFLTSLQTYRQEAAQAAQYIGQGFGVTFDHMSRRPITIHYPYEKLIPSERFRGRIHFEFDKCIACEVCVRVCPINLPVVDWDYQKSVKKKQLRSYSIDFGVCIFCGNCVEYCPTNCLSMTEEYELSVYDRHELNFDHVALGRVPTSVVQDTLVTPVLGLGYLPKGELSSLP</sequence>
<gene>
    <name evidence="1" type="primary">ndhI</name>
</gene>
<organism>
    <name type="scientific">Nephroselmis olivacea</name>
    <name type="common">Green alga</name>
    <dbReference type="NCBI Taxonomy" id="31312"/>
    <lineage>
        <taxon>Eukaryota</taxon>
        <taxon>Viridiplantae</taxon>
        <taxon>Chlorophyta</taxon>
        <taxon>Nephroselmidophyceae</taxon>
        <taxon>Nephroselmidales</taxon>
        <taxon>Nephroselmidaceae</taxon>
        <taxon>Nephroselmis</taxon>
    </lineage>
</organism>
<accession>Q9TKV4</accession>
<feature type="chain" id="PRO_0000245665" description="NAD(P)H-quinone oxidoreductase subunit I, chloroplastic">
    <location>
        <begin position="1"/>
        <end position="173"/>
    </location>
</feature>
<feature type="domain" description="4Fe-4S ferredoxin-type 1" evidence="1">
    <location>
        <begin position="55"/>
        <end position="84"/>
    </location>
</feature>
<feature type="domain" description="4Fe-4S ferredoxin-type 2" evidence="1">
    <location>
        <begin position="95"/>
        <end position="124"/>
    </location>
</feature>
<feature type="binding site" evidence="1">
    <location>
        <position position="64"/>
    </location>
    <ligand>
        <name>[4Fe-4S] cluster</name>
        <dbReference type="ChEBI" id="CHEBI:49883"/>
        <label>1</label>
    </ligand>
</feature>
<feature type="binding site" evidence="1">
    <location>
        <position position="67"/>
    </location>
    <ligand>
        <name>[4Fe-4S] cluster</name>
        <dbReference type="ChEBI" id="CHEBI:49883"/>
        <label>1</label>
    </ligand>
</feature>
<feature type="binding site" evidence="1">
    <location>
        <position position="70"/>
    </location>
    <ligand>
        <name>[4Fe-4S] cluster</name>
        <dbReference type="ChEBI" id="CHEBI:49883"/>
        <label>1</label>
    </ligand>
</feature>
<feature type="binding site" evidence="1">
    <location>
        <position position="74"/>
    </location>
    <ligand>
        <name>[4Fe-4S] cluster</name>
        <dbReference type="ChEBI" id="CHEBI:49883"/>
        <label>2</label>
    </ligand>
</feature>
<feature type="binding site" evidence="1">
    <location>
        <position position="104"/>
    </location>
    <ligand>
        <name>[4Fe-4S] cluster</name>
        <dbReference type="ChEBI" id="CHEBI:49883"/>
        <label>2</label>
    </ligand>
</feature>
<feature type="binding site" evidence="1">
    <location>
        <position position="107"/>
    </location>
    <ligand>
        <name>[4Fe-4S] cluster</name>
        <dbReference type="ChEBI" id="CHEBI:49883"/>
        <label>2</label>
    </ligand>
</feature>
<feature type="binding site" evidence="1">
    <location>
        <position position="110"/>
    </location>
    <ligand>
        <name>[4Fe-4S] cluster</name>
        <dbReference type="ChEBI" id="CHEBI:49883"/>
        <label>2</label>
    </ligand>
</feature>
<feature type="binding site" evidence="1">
    <location>
        <position position="114"/>
    </location>
    <ligand>
        <name>[4Fe-4S] cluster</name>
        <dbReference type="ChEBI" id="CHEBI:49883"/>
        <label>1</label>
    </ligand>
</feature>
<comment type="function">
    <text evidence="1">NDH shuttles electrons from NAD(P)H:plastoquinone, via FMN and iron-sulfur (Fe-S) centers, to quinones in the photosynthetic chain and possibly in a chloroplast respiratory chain. The immediate electron acceptor for the enzyme in this species is believed to be plastoquinone. Couples the redox reaction to proton translocation, and thus conserves the redox energy in a proton gradient.</text>
</comment>
<comment type="catalytic activity">
    <reaction evidence="1">
        <text>a plastoquinone + NADH + (n+1) H(+)(in) = a plastoquinol + NAD(+) + n H(+)(out)</text>
        <dbReference type="Rhea" id="RHEA:42608"/>
        <dbReference type="Rhea" id="RHEA-COMP:9561"/>
        <dbReference type="Rhea" id="RHEA-COMP:9562"/>
        <dbReference type="ChEBI" id="CHEBI:15378"/>
        <dbReference type="ChEBI" id="CHEBI:17757"/>
        <dbReference type="ChEBI" id="CHEBI:57540"/>
        <dbReference type="ChEBI" id="CHEBI:57945"/>
        <dbReference type="ChEBI" id="CHEBI:62192"/>
    </reaction>
</comment>
<comment type="catalytic activity">
    <reaction evidence="1">
        <text>a plastoquinone + NADPH + (n+1) H(+)(in) = a plastoquinol + NADP(+) + n H(+)(out)</text>
        <dbReference type="Rhea" id="RHEA:42612"/>
        <dbReference type="Rhea" id="RHEA-COMP:9561"/>
        <dbReference type="Rhea" id="RHEA-COMP:9562"/>
        <dbReference type="ChEBI" id="CHEBI:15378"/>
        <dbReference type="ChEBI" id="CHEBI:17757"/>
        <dbReference type="ChEBI" id="CHEBI:57783"/>
        <dbReference type="ChEBI" id="CHEBI:58349"/>
        <dbReference type="ChEBI" id="CHEBI:62192"/>
    </reaction>
</comment>
<comment type="cofactor">
    <cofactor evidence="1">
        <name>[4Fe-4S] cluster</name>
        <dbReference type="ChEBI" id="CHEBI:49883"/>
    </cofactor>
    <text evidence="1">Binds 2 [4Fe-4S] clusters per subunit.</text>
</comment>
<comment type="subunit">
    <text evidence="1">NDH is composed of at least 16 different subunits, 5 of which are encoded in the nucleus.</text>
</comment>
<comment type="subcellular location">
    <subcellularLocation>
        <location evidence="1">Plastid</location>
        <location evidence="1">Chloroplast thylakoid membrane</location>
        <topology evidence="1">Peripheral membrane protein</topology>
    </subcellularLocation>
</comment>
<comment type="similarity">
    <text evidence="1">Belongs to the complex I 23 kDa subunit family.</text>
</comment>
<protein>
    <recommendedName>
        <fullName evidence="1">NAD(P)H-quinone oxidoreductase subunit I, chloroplastic</fullName>
        <ecNumber evidence="1">7.1.1.-</ecNumber>
    </recommendedName>
    <alternativeName>
        <fullName evidence="1">NAD(P)H dehydrogenase subunit I</fullName>
        <shortName evidence="1">NDH subunit I</shortName>
    </alternativeName>
    <alternativeName>
        <fullName evidence="1">NADH-plastoquinone oxidoreductase subunit I</fullName>
    </alternativeName>
</protein>
<keyword id="KW-0004">4Fe-4S</keyword>
<keyword id="KW-0150">Chloroplast</keyword>
<keyword id="KW-0408">Iron</keyword>
<keyword id="KW-0411">Iron-sulfur</keyword>
<keyword id="KW-0472">Membrane</keyword>
<keyword id="KW-0479">Metal-binding</keyword>
<keyword id="KW-0520">NAD</keyword>
<keyword id="KW-0521">NADP</keyword>
<keyword id="KW-0934">Plastid</keyword>
<keyword id="KW-0618">Plastoquinone</keyword>
<keyword id="KW-0874">Quinone</keyword>
<keyword id="KW-0677">Repeat</keyword>
<keyword id="KW-0793">Thylakoid</keyword>
<keyword id="KW-1278">Translocase</keyword>
<name>NDHI_NEPOL</name>
<evidence type="ECO:0000255" key="1">
    <source>
        <dbReference type="HAMAP-Rule" id="MF_01351"/>
    </source>
</evidence>